<feature type="chain" id="PRO_1000099401" description="DNA repair protein RecO">
    <location>
        <begin position="1"/>
        <end position="256"/>
    </location>
</feature>
<gene>
    <name evidence="1" type="primary">recO</name>
    <name type="ordered locus">Rleg2_1003</name>
</gene>
<reference key="1">
    <citation type="journal article" date="2010" name="Stand. Genomic Sci.">
        <title>Complete genome sequence of Rhizobium leguminosarum bv trifolii strain WSM2304, an effective microsymbiont of the South American clover Trifolium polymorphum.</title>
        <authorList>
            <person name="Reeve W."/>
            <person name="O'Hara G."/>
            <person name="Chain P."/>
            <person name="Ardley J."/>
            <person name="Brau L."/>
            <person name="Nandesena K."/>
            <person name="Tiwari R."/>
            <person name="Malfatti S."/>
            <person name="Kiss H."/>
            <person name="Lapidus A."/>
            <person name="Copeland A."/>
            <person name="Nolan M."/>
            <person name="Land M."/>
            <person name="Ivanova N."/>
            <person name="Mavromatis K."/>
            <person name="Markowitz V."/>
            <person name="Kyrpides N."/>
            <person name="Melino V."/>
            <person name="Denton M."/>
            <person name="Yates R."/>
            <person name="Howieson J."/>
        </authorList>
    </citation>
    <scope>NUCLEOTIDE SEQUENCE [LARGE SCALE GENOMIC DNA]</scope>
    <source>
        <strain>WSM2304</strain>
    </source>
</reference>
<sequence>MQWQDHAIILGVKRHGETSVIAEVMTRDRGRHLGLVRSGRSRAMQPVLQAGNAVEVIWRARLDEHLGEFRVEPVTLRAARLMETATAVYGVQAMGALLRLLPERDPHPHLFDALEVILDHLHNPADAGELFVRFELAVLNDLGFGLDLAECAATGARSDLAYVSPKSGRAVSRSAGAPWADKMLLLPPFLGIEGNHAADFDSLSAAFRLTGFFLHRHVYEPRGIEAAAARDGFVQAALKALNPALRTLSGPNDISA</sequence>
<organism>
    <name type="scientific">Rhizobium leguminosarum bv. trifolii (strain WSM2304)</name>
    <dbReference type="NCBI Taxonomy" id="395492"/>
    <lineage>
        <taxon>Bacteria</taxon>
        <taxon>Pseudomonadati</taxon>
        <taxon>Pseudomonadota</taxon>
        <taxon>Alphaproteobacteria</taxon>
        <taxon>Hyphomicrobiales</taxon>
        <taxon>Rhizobiaceae</taxon>
        <taxon>Rhizobium/Agrobacterium group</taxon>
        <taxon>Rhizobium</taxon>
    </lineage>
</organism>
<proteinExistence type="inferred from homology"/>
<keyword id="KW-0227">DNA damage</keyword>
<keyword id="KW-0233">DNA recombination</keyword>
<keyword id="KW-0234">DNA repair</keyword>
<keyword id="KW-1185">Reference proteome</keyword>
<accession>B5ZW78</accession>
<dbReference type="EMBL" id="CP001191">
    <property type="protein sequence ID" value="ACI54297.1"/>
    <property type="molecule type" value="Genomic_DNA"/>
</dbReference>
<dbReference type="RefSeq" id="WP_012557123.1">
    <property type="nucleotide sequence ID" value="NC_011369.1"/>
</dbReference>
<dbReference type="SMR" id="B5ZW78"/>
<dbReference type="STRING" id="395492.Rleg2_1003"/>
<dbReference type="KEGG" id="rlt:Rleg2_1003"/>
<dbReference type="eggNOG" id="COG1381">
    <property type="taxonomic scope" value="Bacteria"/>
</dbReference>
<dbReference type="HOGENOM" id="CLU_086029_0_0_5"/>
<dbReference type="Proteomes" id="UP000008330">
    <property type="component" value="Chromosome"/>
</dbReference>
<dbReference type="GO" id="GO:0043590">
    <property type="term" value="C:bacterial nucleoid"/>
    <property type="evidence" value="ECO:0007669"/>
    <property type="project" value="TreeGrafter"/>
</dbReference>
<dbReference type="GO" id="GO:0006310">
    <property type="term" value="P:DNA recombination"/>
    <property type="evidence" value="ECO:0007669"/>
    <property type="project" value="UniProtKB-UniRule"/>
</dbReference>
<dbReference type="GO" id="GO:0006302">
    <property type="term" value="P:double-strand break repair"/>
    <property type="evidence" value="ECO:0007669"/>
    <property type="project" value="TreeGrafter"/>
</dbReference>
<dbReference type="Gene3D" id="2.40.50.140">
    <property type="entry name" value="Nucleic acid-binding proteins"/>
    <property type="match status" value="1"/>
</dbReference>
<dbReference type="Gene3D" id="1.20.1440.120">
    <property type="entry name" value="Recombination protein O, C-terminal domain"/>
    <property type="match status" value="1"/>
</dbReference>
<dbReference type="HAMAP" id="MF_00201">
    <property type="entry name" value="RecO"/>
    <property type="match status" value="1"/>
</dbReference>
<dbReference type="InterPro" id="IPR037278">
    <property type="entry name" value="ARFGAP/RecO"/>
</dbReference>
<dbReference type="InterPro" id="IPR022572">
    <property type="entry name" value="DNA_rep/recomb_RecO_N"/>
</dbReference>
<dbReference type="InterPro" id="IPR012340">
    <property type="entry name" value="NA-bd_OB-fold"/>
</dbReference>
<dbReference type="InterPro" id="IPR003717">
    <property type="entry name" value="RecO"/>
</dbReference>
<dbReference type="InterPro" id="IPR042242">
    <property type="entry name" value="RecO_C"/>
</dbReference>
<dbReference type="NCBIfam" id="TIGR00613">
    <property type="entry name" value="reco"/>
    <property type="match status" value="1"/>
</dbReference>
<dbReference type="PANTHER" id="PTHR33991">
    <property type="entry name" value="DNA REPAIR PROTEIN RECO"/>
    <property type="match status" value="1"/>
</dbReference>
<dbReference type="PANTHER" id="PTHR33991:SF1">
    <property type="entry name" value="DNA REPAIR PROTEIN RECO"/>
    <property type="match status" value="1"/>
</dbReference>
<dbReference type="Pfam" id="PF02565">
    <property type="entry name" value="RecO_C"/>
    <property type="match status" value="1"/>
</dbReference>
<dbReference type="Pfam" id="PF11967">
    <property type="entry name" value="RecO_N"/>
    <property type="match status" value="1"/>
</dbReference>
<dbReference type="SUPFAM" id="SSF57863">
    <property type="entry name" value="ArfGap/RecO-like zinc finger"/>
    <property type="match status" value="1"/>
</dbReference>
<dbReference type="SUPFAM" id="SSF50249">
    <property type="entry name" value="Nucleic acid-binding proteins"/>
    <property type="match status" value="1"/>
</dbReference>
<protein>
    <recommendedName>
        <fullName evidence="1">DNA repair protein RecO</fullName>
    </recommendedName>
    <alternativeName>
        <fullName evidence="1">Recombination protein O</fullName>
    </alternativeName>
</protein>
<name>RECO_RHILW</name>
<evidence type="ECO:0000255" key="1">
    <source>
        <dbReference type="HAMAP-Rule" id="MF_00201"/>
    </source>
</evidence>
<comment type="function">
    <text evidence="1">Involved in DNA repair and RecF pathway recombination.</text>
</comment>
<comment type="similarity">
    <text evidence="1">Belongs to the RecO family.</text>
</comment>